<gene>
    <name evidence="1" type="primary">mutS</name>
    <name type="ordered locus">CTA_0862</name>
</gene>
<protein>
    <recommendedName>
        <fullName evidence="1">DNA mismatch repair protein MutS</fullName>
    </recommendedName>
</protein>
<comment type="function">
    <text evidence="1">This protein is involved in the repair of mismatches in DNA. It is possible that it carries out the mismatch recognition step. This protein has a weak ATPase activity.</text>
</comment>
<comment type="similarity">
    <text evidence="1">Belongs to the DNA mismatch repair MutS family.</text>
</comment>
<dbReference type="EMBL" id="CP000051">
    <property type="protein sequence ID" value="AAX51072.1"/>
    <property type="molecule type" value="Genomic_DNA"/>
</dbReference>
<dbReference type="RefSeq" id="WP_011324868.1">
    <property type="nucleotide sequence ID" value="NC_007429.1"/>
</dbReference>
<dbReference type="SMR" id="Q3KKQ0"/>
<dbReference type="KEGG" id="cta:CTA_0862"/>
<dbReference type="HOGENOM" id="CLU_002472_4_0_0"/>
<dbReference type="Proteomes" id="UP000002532">
    <property type="component" value="Chromosome"/>
</dbReference>
<dbReference type="GO" id="GO:0005829">
    <property type="term" value="C:cytosol"/>
    <property type="evidence" value="ECO:0007669"/>
    <property type="project" value="TreeGrafter"/>
</dbReference>
<dbReference type="GO" id="GO:0005524">
    <property type="term" value="F:ATP binding"/>
    <property type="evidence" value="ECO:0007669"/>
    <property type="project" value="UniProtKB-UniRule"/>
</dbReference>
<dbReference type="GO" id="GO:0140664">
    <property type="term" value="F:ATP-dependent DNA damage sensor activity"/>
    <property type="evidence" value="ECO:0007669"/>
    <property type="project" value="InterPro"/>
</dbReference>
<dbReference type="GO" id="GO:0003684">
    <property type="term" value="F:damaged DNA binding"/>
    <property type="evidence" value="ECO:0007669"/>
    <property type="project" value="UniProtKB-UniRule"/>
</dbReference>
<dbReference type="GO" id="GO:0030983">
    <property type="term" value="F:mismatched DNA binding"/>
    <property type="evidence" value="ECO:0007669"/>
    <property type="project" value="InterPro"/>
</dbReference>
<dbReference type="GO" id="GO:0006298">
    <property type="term" value="P:mismatch repair"/>
    <property type="evidence" value="ECO:0007669"/>
    <property type="project" value="UniProtKB-UniRule"/>
</dbReference>
<dbReference type="CDD" id="cd03284">
    <property type="entry name" value="ABC_MutS1"/>
    <property type="match status" value="1"/>
</dbReference>
<dbReference type="FunFam" id="3.30.420.110:FF:000030">
    <property type="entry name" value="DNA mismatch repair protein MutS"/>
    <property type="match status" value="1"/>
</dbReference>
<dbReference type="FunFam" id="3.40.1170.10:FF:000016">
    <property type="entry name" value="DNA mismatch repair protein MutS"/>
    <property type="match status" value="1"/>
</dbReference>
<dbReference type="FunFam" id="3.40.50.300:FF:002842">
    <property type="entry name" value="DNA mismatch repair protein MutS"/>
    <property type="match status" value="1"/>
</dbReference>
<dbReference type="Gene3D" id="1.10.1420.10">
    <property type="match status" value="2"/>
</dbReference>
<dbReference type="Gene3D" id="3.40.1170.10">
    <property type="entry name" value="DNA repair protein MutS, domain I"/>
    <property type="match status" value="1"/>
</dbReference>
<dbReference type="Gene3D" id="3.30.420.110">
    <property type="entry name" value="MutS, connector domain"/>
    <property type="match status" value="1"/>
</dbReference>
<dbReference type="Gene3D" id="3.40.50.300">
    <property type="entry name" value="P-loop containing nucleotide triphosphate hydrolases"/>
    <property type="match status" value="1"/>
</dbReference>
<dbReference type="HAMAP" id="MF_00096">
    <property type="entry name" value="MutS"/>
    <property type="match status" value="1"/>
</dbReference>
<dbReference type="InterPro" id="IPR005748">
    <property type="entry name" value="DNA_mismatch_repair_MutS"/>
</dbReference>
<dbReference type="InterPro" id="IPR007695">
    <property type="entry name" value="DNA_mismatch_repair_MutS-lik_N"/>
</dbReference>
<dbReference type="InterPro" id="IPR017261">
    <property type="entry name" value="DNA_mismatch_repair_MutS/MSH"/>
</dbReference>
<dbReference type="InterPro" id="IPR000432">
    <property type="entry name" value="DNA_mismatch_repair_MutS_C"/>
</dbReference>
<dbReference type="InterPro" id="IPR007861">
    <property type="entry name" value="DNA_mismatch_repair_MutS_clamp"/>
</dbReference>
<dbReference type="InterPro" id="IPR007696">
    <property type="entry name" value="DNA_mismatch_repair_MutS_core"/>
</dbReference>
<dbReference type="InterPro" id="IPR016151">
    <property type="entry name" value="DNA_mismatch_repair_MutS_N"/>
</dbReference>
<dbReference type="InterPro" id="IPR036187">
    <property type="entry name" value="DNA_mismatch_repair_MutS_sf"/>
</dbReference>
<dbReference type="InterPro" id="IPR007860">
    <property type="entry name" value="DNA_mmatch_repair_MutS_con_dom"/>
</dbReference>
<dbReference type="InterPro" id="IPR045076">
    <property type="entry name" value="MutS"/>
</dbReference>
<dbReference type="InterPro" id="IPR036678">
    <property type="entry name" value="MutS_con_dom_sf"/>
</dbReference>
<dbReference type="InterPro" id="IPR027417">
    <property type="entry name" value="P-loop_NTPase"/>
</dbReference>
<dbReference type="NCBIfam" id="TIGR01070">
    <property type="entry name" value="mutS1"/>
    <property type="match status" value="1"/>
</dbReference>
<dbReference type="NCBIfam" id="NF003810">
    <property type="entry name" value="PRK05399.1"/>
    <property type="match status" value="1"/>
</dbReference>
<dbReference type="PANTHER" id="PTHR11361:SF34">
    <property type="entry name" value="DNA MISMATCH REPAIR PROTEIN MSH1, MITOCHONDRIAL"/>
    <property type="match status" value="1"/>
</dbReference>
<dbReference type="PANTHER" id="PTHR11361">
    <property type="entry name" value="DNA MISMATCH REPAIR PROTEIN MUTS FAMILY MEMBER"/>
    <property type="match status" value="1"/>
</dbReference>
<dbReference type="Pfam" id="PF01624">
    <property type="entry name" value="MutS_I"/>
    <property type="match status" value="1"/>
</dbReference>
<dbReference type="Pfam" id="PF05188">
    <property type="entry name" value="MutS_II"/>
    <property type="match status" value="1"/>
</dbReference>
<dbReference type="Pfam" id="PF05192">
    <property type="entry name" value="MutS_III"/>
    <property type="match status" value="1"/>
</dbReference>
<dbReference type="Pfam" id="PF05190">
    <property type="entry name" value="MutS_IV"/>
    <property type="match status" value="1"/>
</dbReference>
<dbReference type="Pfam" id="PF00488">
    <property type="entry name" value="MutS_V"/>
    <property type="match status" value="1"/>
</dbReference>
<dbReference type="PIRSF" id="PIRSF037677">
    <property type="entry name" value="DNA_mis_repair_Msh6"/>
    <property type="match status" value="1"/>
</dbReference>
<dbReference type="SMART" id="SM00534">
    <property type="entry name" value="MUTSac"/>
    <property type="match status" value="1"/>
</dbReference>
<dbReference type="SMART" id="SM00533">
    <property type="entry name" value="MUTSd"/>
    <property type="match status" value="1"/>
</dbReference>
<dbReference type="SUPFAM" id="SSF55271">
    <property type="entry name" value="DNA repair protein MutS, domain I"/>
    <property type="match status" value="1"/>
</dbReference>
<dbReference type="SUPFAM" id="SSF53150">
    <property type="entry name" value="DNA repair protein MutS, domain II"/>
    <property type="match status" value="1"/>
</dbReference>
<dbReference type="SUPFAM" id="SSF48334">
    <property type="entry name" value="DNA repair protein MutS, domain III"/>
    <property type="match status" value="1"/>
</dbReference>
<dbReference type="SUPFAM" id="SSF52540">
    <property type="entry name" value="P-loop containing nucleoside triphosphate hydrolases"/>
    <property type="match status" value="1"/>
</dbReference>
<dbReference type="PROSITE" id="PS00486">
    <property type="entry name" value="DNA_MISMATCH_REPAIR_2"/>
    <property type="match status" value="1"/>
</dbReference>
<name>MUTS_CHLTA</name>
<feature type="chain" id="PRO_0000224360" description="DNA mismatch repair protein MutS">
    <location>
        <begin position="1"/>
        <end position="820"/>
    </location>
</feature>
<feature type="binding site" evidence="1">
    <location>
        <begin position="618"/>
        <end position="625"/>
    </location>
    <ligand>
        <name>ATP</name>
        <dbReference type="ChEBI" id="CHEBI:30616"/>
    </ligand>
</feature>
<accession>Q3KKQ0</accession>
<organism>
    <name type="scientific">Chlamydia trachomatis serovar A (strain ATCC VR-571B / DSM 19440 / HAR-13)</name>
    <dbReference type="NCBI Taxonomy" id="315277"/>
    <lineage>
        <taxon>Bacteria</taxon>
        <taxon>Pseudomonadati</taxon>
        <taxon>Chlamydiota</taxon>
        <taxon>Chlamydiia</taxon>
        <taxon>Chlamydiales</taxon>
        <taxon>Chlamydiaceae</taxon>
        <taxon>Chlamydia/Chlamydophila group</taxon>
        <taxon>Chlamydia</taxon>
    </lineage>
</organism>
<evidence type="ECO:0000255" key="1">
    <source>
        <dbReference type="HAMAP-Rule" id="MF_00096"/>
    </source>
</evidence>
<proteinExistence type="inferred from homology"/>
<keyword id="KW-0067">ATP-binding</keyword>
<keyword id="KW-0227">DNA damage</keyword>
<keyword id="KW-0234">DNA repair</keyword>
<keyword id="KW-0238">DNA-binding</keyword>
<keyword id="KW-0547">Nucleotide-binding</keyword>
<reference key="1">
    <citation type="journal article" date="2005" name="Infect. Immun.">
        <title>Comparative genomic analysis of Chlamydia trachomatis oculotropic and genitotropic strains.</title>
        <authorList>
            <person name="Carlson J.H."/>
            <person name="Porcella S.F."/>
            <person name="McClarty G."/>
            <person name="Caldwell H.D."/>
        </authorList>
    </citation>
    <scope>NUCLEOTIDE SEQUENCE [LARGE SCALE GENOMIC DNA]</scope>
    <source>
        <strain>ATCC VR-571B / DSM 19440 / HAR-13</strain>
    </source>
</reference>
<sequence length="820" mass="92230">MTHKLTPMMQQWHQCKEQAGDCLLLFRLGEFYEAFFDDALILAQNLDITLTQRQNVPMSGIPATCLDGYVDRLVSRGFKVAIAEQADNTEGSKGLVPRTINRLITPGALLSSSLLPEKANNYVLAINQVGSLYGLSCLDLSIGTFLVAEYDNTKDLIEAICRLAPTELLSHAKFYQKNEAVIKQLQQHLRITLSEYVSWAFEYQSATKKLYTCFQVSSLDGFGLQGLVPAINAAGALLSYIQDKLLLPISHLSIPKIYGQQKHLLIDKASQTNLELLSPIHGEHRKGSLLQVMERTSTPMGGRLLRNTLINPFYDLKEITLRQDSVEFFLQQADLRKILKRQLSCVRDLERLATKISTSLATPKDIGTLRDSLLSCTHIADNLQNCALPEFLENKFLIAPPLCSLIKTLSTELIQELPLKVSEGNIFANHYHPDLLRLRNIKENSKSWILEYQERIRNETGIKKLKVCYAQALGYYIEVASNLAPQLPKEFIRRQSRLHAERFTTQELQQFQDEVFSVEDKLQTLETKLFKELCFYIVEHRDLILKLSTAVADLDYVVSLAELAAEYDYRRPLVDHSDALSITKGMHPVALTLLDKGTFIPNDTVMHSAQTRMILLTGPNMAGKSTYIRQIALLVIMAQMGSFIPARSAHIGIVDKIFTRIGAGDNLSKGMSTFMVEMAETANILHNATDRSLVILDEIGRGTSTYDGLAIAQAVVEFLLFTDGKKAKTLFATHYKELTELEMHCQHVENFHAMVKENSGQPIFMYEIVKGHSKKSFGIHVAKLAGFPLSVVSRAQQILHQFEGPDLRPEPEKAQQLVMF</sequence>